<sequence length="263" mass="28925">MATPVKKWLLRVAPWFLPVGIVAVWQLASSVGWLSTRILPSPEGVVTAFWTLSASGELWQHLAISSWRALIGFSIGGSLGLILGLISGLSRWGERLLDTSIQMLRNVPHLALIPLVILWFGIDESAKIFLVALGTLFPIYINTWHGIRNIDRGLVEMARSYGLSGIPLFIHVILPGALPSIMVGVRFALGLMWLTLIVAETISANSGIGYLAMNAREFLQTDVVVVAIILYALLGKLADVSAQLLERLWLRWNPAYHLKEATV</sequence>
<gene>
    <name type="primary">ssuC</name>
    <name type="synonym">ycbM</name>
    <name type="ordered locus">b0934</name>
    <name type="ordered locus">JW5121</name>
</gene>
<name>SSUC_ECOLI</name>
<proteinExistence type="evidence at protein level"/>
<dbReference type="EMBL" id="AJ237695">
    <property type="protein sequence ID" value="CAB40392.1"/>
    <property type="molecule type" value="Genomic_DNA"/>
</dbReference>
<dbReference type="EMBL" id="U00096">
    <property type="protein sequence ID" value="AAC74020.2"/>
    <property type="molecule type" value="Genomic_DNA"/>
</dbReference>
<dbReference type="EMBL" id="AP009048">
    <property type="protein sequence ID" value="BAA35689.2"/>
    <property type="molecule type" value="Genomic_DNA"/>
</dbReference>
<dbReference type="PIR" id="E64833">
    <property type="entry name" value="E64833"/>
</dbReference>
<dbReference type="RefSeq" id="NP_415454.4">
    <property type="nucleotide sequence ID" value="NC_000913.3"/>
</dbReference>
<dbReference type="RefSeq" id="WP_000235203.1">
    <property type="nucleotide sequence ID" value="NZ_STEB01000006.1"/>
</dbReference>
<dbReference type="SMR" id="P75851"/>
<dbReference type="BioGRID" id="4260017">
    <property type="interactions" value="16"/>
</dbReference>
<dbReference type="ComplexPortal" id="CPX-4313">
    <property type="entry name" value="Aliphatic sulfonate ABC transporter complex"/>
</dbReference>
<dbReference type="FunCoup" id="P75851">
    <property type="interactions" value="656"/>
</dbReference>
<dbReference type="STRING" id="511145.b0934"/>
<dbReference type="TCDB" id="3.A.1.17.10">
    <property type="family name" value="the atp-binding cassette (abc) superfamily"/>
</dbReference>
<dbReference type="PaxDb" id="511145-b0934"/>
<dbReference type="EnsemblBacteria" id="AAC74020">
    <property type="protein sequence ID" value="AAC74020"/>
    <property type="gene ID" value="b0934"/>
</dbReference>
<dbReference type="GeneID" id="93776480"/>
<dbReference type="GeneID" id="947216"/>
<dbReference type="KEGG" id="ecj:JW5121"/>
<dbReference type="KEGG" id="eco:b0934"/>
<dbReference type="KEGG" id="ecoc:C3026_05735"/>
<dbReference type="PATRIC" id="fig|1411691.4.peg.1340"/>
<dbReference type="EchoBASE" id="EB3469"/>
<dbReference type="eggNOG" id="COG0600">
    <property type="taxonomic scope" value="Bacteria"/>
</dbReference>
<dbReference type="HOGENOM" id="CLU_046113_1_2_6"/>
<dbReference type="InParanoid" id="P75851"/>
<dbReference type="OMA" id="RWHPGYQ"/>
<dbReference type="OrthoDB" id="8138334at2"/>
<dbReference type="PhylomeDB" id="P75851"/>
<dbReference type="BioCyc" id="EcoCyc:YCBM-MONOMER"/>
<dbReference type="BioCyc" id="MetaCyc:YCBM-MONOMER"/>
<dbReference type="PRO" id="PR:P75851"/>
<dbReference type="Proteomes" id="UP000000625">
    <property type="component" value="Chromosome"/>
</dbReference>
<dbReference type="GO" id="GO:0055052">
    <property type="term" value="C:ATP-binding cassette (ABC) transporter complex, substrate-binding subunit-containing"/>
    <property type="evidence" value="ECO:0000303"/>
    <property type="project" value="ComplexPortal"/>
</dbReference>
<dbReference type="GO" id="GO:0016020">
    <property type="term" value="C:membrane"/>
    <property type="evidence" value="ECO:0000303"/>
    <property type="project" value="ComplexPortal"/>
</dbReference>
<dbReference type="GO" id="GO:0005886">
    <property type="term" value="C:plasma membrane"/>
    <property type="evidence" value="ECO:0000255"/>
    <property type="project" value="EcoCyc"/>
</dbReference>
<dbReference type="GO" id="GO:0042959">
    <property type="term" value="F:ABC-type alkanesulfonate transporter transporter activity"/>
    <property type="evidence" value="ECO:0000269"/>
    <property type="project" value="EcoCyc"/>
</dbReference>
<dbReference type="GO" id="GO:0042918">
    <property type="term" value="P:alkanesulfonate transmembrane transport"/>
    <property type="evidence" value="ECO:0000269"/>
    <property type="project" value="EcoCyc"/>
</dbReference>
<dbReference type="GO" id="GO:0010438">
    <property type="term" value="P:cellular response to sulfur starvation"/>
    <property type="evidence" value="ECO:0000303"/>
    <property type="project" value="ComplexPortal"/>
</dbReference>
<dbReference type="GO" id="GO:0006790">
    <property type="term" value="P:sulfur compound metabolic process"/>
    <property type="evidence" value="ECO:0000316"/>
    <property type="project" value="EcoliWiki"/>
</dbReference>
<dbReference type="CDD" id="cd06261">
    <property type="entry name" value="TM_PBP2"/>
    <property type="match status" value="1"/>
</dbReference>
<dbReference type="FunFam" id="1.10.3720.10:FF:000003">
    <property type="entry name" value="Aliphatic sulfonate ABC transporter permease"/>
    <property type="match status" value="1"/>
</dbReference>
<dbReference type="Gene3D" id="1.10.3720.10">
    <property type="entry name" value="MetI-like"/>
    <property type="match status" value="1"/>
</dbReference>
<dbReference type="InterPro" id="IPR000515">
    <property type="entry name" value="MetI-like"/>
</dbReference>
<dbReference type="InterPro" id="IPR035906">
    <property type="entry name" value="MetI-like_sf"/>
</dbReference>
<dbReference type="NCBIfam" id="NF008470">
    <property type="entry name" value="PRK11365.1"/>
    <property type="match status" value="1"/>
</dbReference>
<dbReference type="PANTHER" id="PTHR30151:SF38">
    <property type="entry name" value="ALIPHATIC SULFONATES TRANSPORT PERMEASE PROTEIN SSUC-RELATED"/>
    <property type="match status" value="1"/>
</dbReference>
<dbReference type="PANTHER" id="PTHR30151">
    <property type="entry name" value="ALKANE SULFONATE ABC TRANSPORTER-RELATED, MEMBRANE SUBUNIT"/>
    <property type="match status" value="1"/>
</dbReference>
<dbReference type="Pfam" id="PF00528">
    <property type="entry name" value="BPD_transp_1"/>
    <property type="match status" value="1"/>
</dbReference>
<dbReference type="SUPFAM" id="SSF161098">
    <property type="entry name" value="MetI-like"/>
    <property type="match status" value="1"/>
</dbReference>
<dbReference type="PROSITE" id="PS50928">
    <property type="entry name" value="ABC_TM1"/>
    <property type="match status" value="1"/>
</dbReference>
<evidence type="ECO:0000255" key="1"/>
<evidence type="ECO:0000255" key="2">
    <source>
        <dbReference type="PROSITE-ProRule" id="PRU00441"/>
    </source>
</evidence>
<evidence type="ECO:0000305" key="3"/>
<organism>
    <name type="scientific">Escherichia coli (strain K12)</name>
    <dbReference type="NCBI Taxonomy" id="83333"/>
    <lineage>
        <taxon>Bacteria</taxon>
        <taxon>Pseudomonadati</taxon>
        <taxon>Pseudomonadota</taxon>
        <taxon>Gammaproteobacteria</taxon>
        <taxon>Enterobacterales</taxon>
        <taxon>Enterobacteriaceae</taxon>
        <taxon>Escherichia</taxon>
    </lineage>
</organism>
<keyword id="KW-0997">Cell inner membrane</keyword>
<keyword id="KW-1003">Cell membrane</keyword>
<keyword id="KW-0472">Membrane</keyword>
<keyword id="KW-1185">Reference proteome</keyword>
<keyword id="KW-0812">Transmembrane</keyword>
<keyword id="KW-1133">Transmembrane helix</keyword>
<keyword id="KW-0813">Transport</keyword>
<protein>
    <recommendedName>
        <fullName>Putative aliphatic sulfonates transport permease protein SsuC</fullName>
    </recommendedName>
</protein>
<reference key="1">
    <citation type="journal article" date="1999" name="J. Biol. Chem.">
        <title>The Escherichia coli ssuEADCB gene cluster is required for the utilization of sulfur from aliphatic sulfonates and is regulated by the transcriptional activator Cbl.</title>
        <authorList>
            <person name="Van der Ploeg J.R."/>
            <person name="Iwanicka-Nowicka R."/>
            <person name="Bykowski T."/>
            <person name="Hryniewicz M.M."/>
            <person name="Leisinger T."/>
        </authorList>
    </citation>
    <scope>NUCLEOTIDE SEQUENCE [GENOMIC DNA]</scope>
    <source>
        <strain>K12</strain>
    </source>
</reference>
<reference key="2">
    <citation type="journal article" date="1996" name="DNA Res.">
        <title>A 718-kb DNA sequence of the Escherichia coli K-12 genome corresponding to the 12.7-28.0 min region on the linkage map.</title>
        <authorList>
            <person name="Oshima T."/>
            <person name="Aiba H."/>
            <person name="Baba T."/>
            <person name="Fujita K."/>
            <person name="Hayashi K."/>
            <person name="Honjo A."/>
            <person name="Ikemoto K."/>
            <person name="Inada T."/>
            <person name="Itoh T."/>
            <person name="Kajihara M."/>
            <person name="Kanai K."/>
            <person name="Kashimoto K."/>
            <person name="Kimura S."/>
            <person name="Kitagawa M."/>
            <person name="Makino K."/>
            <person name="Masuda S."/>
            <person name="Miki T."/>
            <person name="Mizobuchi K."/>
            <person name="Mori H."/>
            <person name="Motomura K."/>
            <person name="Nakamura Y."/>
            <person name="Nashimoto H."/>
            <person name="Nishio Y."/>
            <person name="Saito N."/>
            <person name="Sampei G."/>
            <person name="Seki Y."/>
            <person name="Tagami H."/>
            <person name="Takemoto K."/>
            <person name="Wada C."/>
            <person name="Yamamoto Y."/>
            <person name="Yano M."/>
            <person name="Horiuchi T."/>
        </authorList>
    </citation>
    <scope>NUCLEOTIDE SEQUENCE [LARGE SCALE GENOMIC DNA]</scope>
    <source>
        <strain>K12 / W3110 / ATCC 27325 / DSM 5911</strain>
    </source>
</reference>
<reference key="3">
    <citation type="journal article" date="1997" name="Science">
        <title>The complete genome sequence of Escherichia coli K-12.</title>
        <authorList>
            <person name="Blattner F.R."/>
            <person name="Plunkett G. III"/>
            <person name="Bloch C.A."/>
            <person name="Perna N.T."/>
            <person name="Burland V."/>
            <person name="Riley M."/>
            <person name="Collado-Vides J."/>
            <person name="Glasner J.D."/>
            <person name="Rode C.K."/>
            <person name="Mayhew G.F."/>
            <person name="Gregor J."/>
            <person name="Davis N.W."/>
            <person name="Kirkpatrick H.A."/>
            <person name="Goeden M.A."/>
            <person name="Rose D.J."/>
            <person name="Mau B."/>
            <person name="Shao Y."/>
        </authorList>
    </citation>
    <scope>NUCLEOTIDE SEQUENCE [LARGE SCALE GENOMIC DNA]</scope>
    <source>
        <strain>K12 / MG1655 / ATCC 47076</strain>
    </source>
</reference>
<reference key="4">
    <citation type="journal article" date="2006" name="Mol. Syst. Biol.">
        <title>Highly accurate genome sequences of Escherichia coli K-12 strains MG1655 and W3110.</title>
        <authorList>
            <person name="Hayashi K."/>
            <person name="Morooka N."/>
            <person name="Yamamoto Y."/>
            <person name="Fujita K."/>
            <person name="Isono K."/>
            <person name="Choi S."/>
            <person name="Ohtsubo E."/>
            <person name="Baba T."/>
            <person name="Wanner B.L."/>
            <person name="Mori H."/>
            <person name="Horiuchi T."/>
        </authorList>
    </citation>
    <scope>NUCLEOTIDE SEQUENCE [LARGE SCALE GENOMIC DNA]</scope>
    <source>
        <strain>K12 / W3110 / ATCC 27325 / DSM 5911</strain>
    </source>
</reference>
<reference key="5">
    <citation type="journal article" date="2002" name="Proc. Natl. Acad. Sci. U.S.A.">
        <title>Rapid topology mapping of Escherichia coli inner-membrane proteins by prediction and PhoA/GFP fusion analysis.</title>
        <authorList>
            <person name="Drew D."/>
            <person name="Sjoestrand D."/>
            <person name="Nilsson J."/>
            <person name="Urbig T."/>
            <person name="Chin C.-N."/>
            <person name="de Gier J.-W."/>
            <person name="von Heijne G."/>
        </authorList>
    </citation>
    <scope>TOPOLOGY</scope>
    <source>
        <strain>K12 / JM109 / ATCC 53323</strain>
    </source>
</reference>
<reference key="6">
    <citation type="journal article" date="2005" name="Science">
        <title>Global topology analysis of the Escherichia coli inner membrane proteome.</title>
        <authorList>
            <person name="Daley D.O."/>
            <person name="Rapp M."/>
            <person name="Granseth E."/>
            <person name="Melen K."/>
            <person name="Drew D."/>
            <person name="von Heijne G."/>
        </authorList>
    </citation>
    <scope>TOPOLOGY [LARGE SCALE ANALYSIS]</scope>
    <source>
        <strain>K12 / MG1655 / ATCC 47076</strain>
    </source>
</reference>
<accession>P75851</accession>
<comment type="function">
    <text>Part of a binding-protein-dependent transport system for aliphatic sulfonates. Probably responsible for the translocation of the substrate across the membrane.</text>
</comment>
<comment type="subcellular location">
    <subcellularLocation>
        <location>Cell inner membrane</location>
        <topology>Multi-pass membrane protein</topology>
    </subcellularLocation>
</comment>
<comment type="similarity">
    <text evidence="3">Belongs to the binding-protein-dependent transport system permease family. CysTW subfamily.</text>
</comment>
<feature type="chain" id="PRO_0000060228" description="Putative aliphatic sulfonates transport permease protein SsuC">
    <location>
        <begin position="1"/>
        <end position="263"/>
    </location>
</feature>
<feature type="topological domain" description="Cytoplasmic" evidence="1">
    <location>
        <begin position="1"/>
        <end position="13"/>
    </location>
</feature>
<feature type="transmembrane region" description="Helical" evidence="2">
    <location>
        <begin position="14"/>
        <end position="34"/>
    </location>
</feature>
<feature type="topological domain" description="Periplasmic" evidence="1">
    <location>
        <begin position="35"/>
        <end position="43"/>
    </location>
</feature>
<feature type="transmembrane region" description="Helical" evidence="2">
    <location>
        <begin position="44"/>
        <end position="64"/>
    </location>
</feature>
<feature type="topological domain" description="Cytoplasmic" evidence="1">
    <location>
        <begin position="65"/>
        <end position="68"/>
    </location>
</feature>
<feature type="transmembrane region" description="Helical" evidence="2">
    <location>
        <begin position="69"/>
        <end position="89"/>
    </location>
</feature>
<feature type="topological domain" description="Periplasmic" evidence="1">
    <location>
        <begin position="90"/>
        <end position="102"/>
    </location>
</feature>
<feature type="transmembrane region" description="Helical" evidence="2">
    <location>
        <begin position="103"/>
        <end position="122"/>
    </location>
</feature>
<feature type="topological domain" description="Cytoplasmic" evidence="1">
    <location>
        <begin position="123"/>
        <end position="125"/>
    </location>
</feature>
<feature type="transmembrane region" description="Helical" evidence="2">
    <location>
        <begin position="126"/>
        <end position="148"/>
    </location>
</feature>
<feature type="topological domain" description="Periplasmic" evidence="1">
    <location>
        <begin position="149"/>
        <end position="164"/>
    </location>
</feature>
<feature type="transmembrane region" description="Helical" evidence="2">
    <location>
        <begin position="165"/>
        <end position="185"/>
    </location>
</feature>
<feature type="topological domain" description="Cytoplasmic" evidence="1">
    <location>
        <begin position="186"/>
        <end position="187"/>
    </location>
</feature>
<feature type="transmembrane region" description="Helical" evidence="2">
    <location>
        <begin position="188"/>
        <end position="208"/>
    </location>
</feature>
<feature type="topological domain" description="Periplasmic" evidence="1">
    <location>
        <begin position="209"/>
        <end position="217"/>
    </location>
</feature>
<feature type="transmembrane region" description="Helical" evidence="2">
    <location>
        <begin position="218"/>
        <end position="238"/>
    </location>
</feature>
<feature type="topological domain" description="Cytoplasmic" evidence="1">
    <location>
        <begin position="239"/>
        <end position="263"/>
    </location>
</feature>
<feature type="domain" description="ABC transmembrane type-1" evidence="2">
    <location>
        <begin position="58"/>
        <end position="242"/>
    </location>
</feature>